<gene>
    <name evidence="9" type="primary">NMT</name>
    <name evidence="9" type="synonym">Cr2270</name>
    <name evidence="10" type="synonym">Cr91</name>
</gene>
<proteinExistence type="evidence at protein level"/>
<name>NMT_CATRO</name>
<comment type="function">
    <text evidence="4 5 6 7">S-adenosyl-L-methionine-dependent N-methyltransferase that catalyzes a nitrogen methylation involved in vindoline biosynthesis (PubMed:20956330, PubMed:21802100). Displays a strict requirement for a 2,3-dihydro bond in the aspidosperma skeleton (PubMed:20956330). Can use 2,3-dihydrotabersonine, 2,3-dihydro-3-hydroxytabersonine and 2,3,6,7-tetraydro-3-hydroxytabersonine as substrates, but not tabersonine, vincadifformine, 21-hydroxycyclolochnericine, tryptamine, norharmane, harmaline, catharanthine, norajmaline, ajmaline, serpentine, ajmalicine, yohimbine or gamma-tocopherol (PubMed:20956330, PubMed:26848097). Inactive with picrinine as substrate (PubMed:35166361).</text>
</comment>
<comment type="catalytic activity">
    <reaction evidence="4 5">
        <text>(3R)-3-hydroxy-16-methoxy-2,3-dihydrotabersonine + S-adenosyl-L-methionine = deacetoxyvindoline + S-adenosyl-L-homocysteine + H(+)</text>
        <dbReference type="Rhea" id="RHEA:11336"/>
        <dbReference type="ChEBI" id="CHEBI:15378"/>
        <dbReference type="ChEBI" id="CHEBI:57856"/>
        <dbReference type="ChEBI" id="CHEBI:57965"/>
        <dbReference type="ChEBI" id="CHEBI:58485"/>
        <dbReference type="ChEBI" id="CHEBI:59789"/>
        <dbReference type="EC" id="2.1.1.99"/>
    </reaction>
</comment>
<comment type="activity regulation">
    <text evidence="4">Inhibited by gamma-tocopherol.</text>
</comment>
<comment type="biophysicochemical properties">
    <kinetics>
        <KM evidence="4">8.8 uM for 2,3-dihydrotabersonine</KM>
        <KM evidence="4">22 uM for S-adenosyl-L-methionine</KM>
        <Vmax evidence="4">67.0 pmol/sec/mg enzyme toward 2,3-dihydrotabersonine</Vmax>
        <Vmax evidence="4">151.6 pmol/sec/mg enzyme toward S-adenosyl-L-methionine</Vmax>
        <text evidence="4">kcat is 2.47 sec(-1) for 2,3-dihydrotabersonine. kcat is 5.4 sec(-1) for S-adenosyl-L-methionine.</text>
    </kinetics>
</comment>
<comment type="pathway">
    <text>Alkaloid biosynthesis; vindoline biosynthesis.</text>
</comment>
<comment type="subunit">
    <text evidence="13">Homodimer.</text>
</comment>
<comment type="subcellular location">
    <subcellularLocation>
        <location evidence="3">Thylakoid</location>
    </subcellularLocation>
    <subcellularLocation>
        <location evidence="7">Peroxisome</location>
    </subcellularLocation>
</comment>
<comment type="tissue specificity">
    <text evidence="8">Mainly expressed in young leaves, and, to a lower extent, in mature leaves, flowers, stems and roots (at protein level).</text>
</comment>
<comment type="induction">
    <text evidence="4">Up-regulated upon methyl jasmonate treatment.</text>
</comment>
<comment type="similarity">
    <text evidence="12">Belongs to the class I-like SAM-binding methyltransferase superfamily. gTMT family.</text>
</comment>
<comment type="sequence caution" evidence="12">
    <conflict type="erroneous initiation">
        <sequence resource="EMBL-CDS" id="ADP00410"/>
    </conflict>
    <text>Extended N-terminus.</text>
</comment>
<protein>
    <recommendedName>
        <fullName evidence="12">3-hydroxy-16-methoxy-2,3-dihydrotabersonine N-methyltransferase</fullName>
        <ecNumber evidence="4 5">2.1.1.99</ecNumber>
    </recommendedName>
    <alternativeName>
        <fullName evidence="12">16-methoxy-2,3-dihydro-3-hydroxytabersonine N-methyltransferase</fullName>
    </alternativeName>
    <alternativeName>
        <fullName evidence="9">2,3-dihydrotabersonine N-methyltransferase</fullName>
        <shortName evidence="9">CrDhtNMT</shortName>
        <shortName evidence="11">CrNMT</shortName>
    </alternativeName>
</protein>
<dbReference type="EC" id="2.1.1.99" evidence="4 5"/>
<dbReference type="EMBL" id="HM584929">
    <property type="protein sequence ID" value="ADP00410.1"/>
    <property type="status" value="ALT_INIT"/>
    <property type="molecule type" value="mRNA"/>
</dbReference>
<dbReference type="EMBL" id="KF896244">
    <property type="protein sequence ID" value="AHH33092.1"/>
    <property type="molecule type" value="mRNA"/>
</dbReference>
<dbReference type="SMR" id="W5U2K2"/>
<dbReference type="KEGG" id="ag:ADP00410"/>
<dbReference type="OrthoDB" id="8300214at2759"/>
<dbReference type="UniPathway" id="UPA00365"/>
<dbReference type="GO" id="GO:0005777">
    <property type="term" value="C:peroxisome"/>
    <property type="evidence" value="ECO:0000314"/>
    <property type="project" value="UniProtKB"/>
</dbReference>
<dbReference type="GO" id="GO:0009579">
    <property type="term" value="C:thylakoid"/>
    <property type="evidence" value="ECO:0007669"/>
    <property type="project" value="UniProtKB-SubCell"/>
</dbReference>
<dbReference type="GO" id="GO:0030768">
    <property type="term" value="F:16-methoxy-2,3-dihydro-3-hydroxytabersonine N-methyltransferase activity"/>
    <property type="evidence" value="ECO:0007669"/>
    <property type="project" value="UniProtKB-EC"/>
</dbReference>
<dbReference type="GO" id="GO:0008170">
    <property type="term" value="F:N-methyltransferase activity"/>
    <property type="evidence" value="ECO:0000314"/>
    <property type="project" value="CACAO"/>
</dbReference>
<dbReference type="GO" id="GO:0009820">
    <property type="term" value="P:alkaloid metabolic process"/>
    <property type="evidence" value="ECO:0007669"/>
    <property type="project" value="UniProtKB-KW"/>
</dbReference>
<dbReference type="GO" id="GO:0032259">
    <property type="term" value="P:methylation"/>
    <property type="evidence" value="ECO:0007669"/>
    <property type="project" value="UniProtKB-KW"/>
</dbReference>
<dbReference type="CDD" id="cd02440">
    <property type="entry name" value="AdoMet_MTases"/>
    <property type="match status" value="1"/>
</dbReference>
<dbReference type="FunFam" id="3.40.50.150:FF:000461">
    <property type="entry name" value="Sarcosine/dimethylglycine N-methyltransferase"/>
    <property type="match status" value="1"/>
</dbReference>
<dbReference type="Gene3D" id="3.40.50.150">
    <property type="entry name" value="Vaccinia Virus protein VP39"/>
    <property type="match status" value="1"/>
</dbReference>
<dbReference type="InterPro" id="IPR050447">
    <property type="entry name" value="Erg6_SMT_methyltransf"/>
</dbReference>
<dbReference type="InterPro" id="IPR013216">
    <property type="entry name" value="Methyltransf_11"/>
</dbReference>
<dbReference type="InterPro" id="IPR025774">
    <property type="entry name" value="MTs_g-TMT"/>
</dbReference>
<dbReference type="InterPro" id="IPR029063">
    <property type="entry name" value="SAM-dependent_MTases_sf"/>
</dbReference>
<dbReference type="PANTHER" id="PTHR44068:SF11">
    <property type="entry name" value="GERANYL DIPHOSPHATE 2-C-METHYLTRANSFERASE"/>
    <property type="match status" value="1"/>
</dbReference>
<dbReference type="PANTHER" id="PTHR44068">
    <property type="entry name" value="ZGC:194242"/>
    <property type="match status" value="1"/>
</dbReference>
<dbReference type="Pfam" id="PF08241">
    <property type="entry name" value="Methyltransf_11"/>
    <property type="match status" value="1"/>
</dbReference>
<dbReference type="SUPFAM" id="SSF53335">
    <property type="entry name" value="S-adenosyl-L-methionine-dependent methyltransferases"/>
    <property type="match status" value="1"/>
</dbReference>
<dbReference type="PROSITE" id="PS51581">
    <property type="entry name" value="SAM_GTMT"/>
    <property type="match status" value="1"/>
</dbReference>
<keyword id="KW-0017">Alkaloid metabolism</keyword>
<keyword id="KW-0489">Methyltransferase</keyword>
<keyword id="KW-0576">Peroxisome</keyword>
<keyword id="KW-0949">S-adenosyl-L-methionine</keyword>
<keyword id="KW-0793">Thylakoid</keyword>
<keyword id="KW-0808">Transferase</keyword>
<accession>W5U2K2</accession>
<accession>E3UTU0</accession>
<organism>
    <name type="scientific">Catharanthus roseus</name>
    <name type="common">Madagascar periwinkle</name>
    <name type="synonym">Vinca rosea</name>
    <dbReference type="NCBI Taxonomy" id="4058"/>
    <lineage>
        <taxon>Eukaryota</taxon>
        <taxon>Viridiplantae</taxon>
        <taxon>Streptophyta</taxon>
        <taxon>Embryophyta</taxon>
        <taxon>Tracheophyta</taxon>
        <taxon>Spermatophyta</taxon>
        <taxon>Magnoliopsida</taxon>
        <taxon>eudicotyledons</taxon>
        <taxon>Gunneridae</taxon>
        <taxon>Pentapetalae</taxon>
        <taxon>asterids</taxon>
        <taxon>lamiids</taxon>
        <taxon>Gentianales</taxon>
        <taxon>Apocynaceae</taxon>
        <taxon>Rauvolfioideae</taxon>
        <taxon>Vinceae</taxon>
        <taxon>Catharanthinae</taxon>
        <taxon>Catharanthus</taxon>
    </lineage>
</organism>
<evidence type="ECO:0000255" key="1"/>
<evidence type="ECO:0000255" key="2">
    <source>
        <dbReference type="PROSITE-ProRule" id="PRU00914"/>
    </source>
</evidence>
<evidence type="ECO:0000269" key="3">
    <source>
    </source>
</evidence>
<evidence type="ECO:0000269" key="4">
    <source>
    </source>
</evidence>
<evidence type="ECO:0000269" key="5">
    <source>
    </source>
</evidence>
<evidence type="ECO:0000269" key="6">
    <source>
    </source>
</evidence>
<evidence type="ECO:0000269" key="7">
    <source>
    </source>
</evidence>
<evidence type="ECO:0000269" key="8">
    <source>
    </source>
</evidence>
<evidence type="ECO:0000303" key="9">
    <source>
    </source>
</evidence>
<evidence type="ECO:0000303" key="10">
    <source>
    </source>
</evidence>
<evidence type="ECO:0000303" key="11">
    <source>
    </source>
</evidence>
<evidence type="ECO:0000305" key="12"/>
<evidence type="ECO:0000305" key="13">
    <source>
    </source>
</evidence>
<reference key="1">
    <citation type="journal article" date="2010" name="Proc. Natl. Acad. Sci. U.S.A.">
        <title>Homolog of tocopherol C methyltransferases catalyzes N methylation in anticancer alkaloid biosynthesis.</title>
        <authorList>
            <person name="Liscombe D.K."/>
            <person name="Usera A.R."/>
            <person name="O'Connor S.E."/>
        </authorList>
    </citation>
    <scope>NUCLEOTIDE SEQUENCE [MRNA]</scope>
    <scope>FUNCTION</scope>
    <scope>SUBSTRATE SPECIFICITY</scope>
    <scope>CATALYTIC ACTIVITY</scope>
    <scope>BIOPHYSICOCHEMICAL PROPERTIES</scope>
    <scope>INDUCTION BY METHYL JASMONATE</scope>
    <scope>ACTIVITY REGULATION</scope>
</reference>
<reference key="2">
    <citation type="journal article" date="2016" name="Plant Physiol.">
        <title>A picrinine N-methyltransferase belongs to a new family of gamma-tocopherol-like methyltransferases found in medicinal plants that make biologically active monoterpenoid indole alkaloids.</title>
        <authorList>
            <person name="Levac D."/>
            <person name="Cazares P."/>
            <person name="Yu F."/>
            <person name="De Luca V."/>
        </authorList>
    </citation>
    <scope>NUCLEOTIDE SEQUENCE [MRNA]</scope>
    <scope>SUBSTRATE SPECIFICITY</scope>
    <scope>SUBUNIT</scope>
</reference>
<reference key="3">
    <citation type="journal article" date="1987" name="Plant Physiol.">
        <title>Subcellular localization of enzymes involved in indole alkaloid biosynthesis in Catharanthus roseus.</title>
        <authorList>
            <person name="De Luca V."/>
            <person name="Cutler A.J."/>
        </authorList>
    </citation>
    <scope>SUBCELLULAR LOCATION</scope>
</reference>
<reference key="4">
    <citation type="journal article" date="2011" name="Phytochemistry">
        <title>A virus-induced gene silencing approach to understanding alkaloid metabolism in Catharanthus roseus.</title>
        <authorList>
            <person name="Liscombe D.K."/>
            <person name="O'Connor S.E."/>
        </authorList>
    </citation>
    <scope>FUNCTION</scope>
    <scope>CATALYTIC ACTIVITY</scope>
</reference>
<reference key="5">
    <citation type="journal article" date="2022" name="Phytochemistry">
        <title>Molecular and biochemical characterization of Catharanthus roseus perivine-Nbeta-methyltransferase.</title>
        <authorList>
            <person name="Levac D."/>
            <person name="Flores P.C."/>
            <person name="De Luca V."/>
        </authorList>
    </citation>
    <scope>TISSUE SPECIFICITY</scope>
</reference>
<reference key="6">
    <citation type="journal article" date="2022" name="Plant Cell Physiol.">
        <title>Tonoplast and peroxisome targeting of gamma-tocopherol N-methyltransferase homologs involved in the synthesis of monoterpene indole alkaloids.</title>
        <authorList>
            <person name="Koudounas K."/>
            <person name="Guirimand G."/>
            <person name="Hoyos L.F.R."/>
            <person name="Carqueijeiro I."/>
            <person name="Cruz P.L."/>
            <person name="Stander E."/>
            <person name="Kulagina N."/>
            <person name="Perrin J."/>
            <person name="Oudin A."/>
            <person name="Besseau S."/>
            <person name="Lanoue A."/>
            <person name="Atehortua L."/>
            <person name="St-Pierre B."/>
            <person name="Giglioli-Guivarc'h N."/>
            <person name="Papon N."/>
            <person name="O'Connor S.E."/>
            <person name="Courdavault V."/>
        </authorList>
    </citation>
    <scope>FUNCTION</scope>
    <scope>SUBCELLULAR LOCATION</scope>
    <scope>GENE FAMILY</scope>
</reference>
<sequence length="289" mass="31789">MEEKQEKVAEFYDKVTGAWDLFYGVHLHDGYYEPGTTATMAISQDAVIRMIDELLRFAGVSEDPAKKPRSMLDVGSGLGGTCVYVAKKYDIQCTGITISPNQVKYAQDYAATEGVENKVSFDCGDALDMPYSDGKFDVVFTINCIEHVHDKEKFIREMVRVAAPGAAIIIASQAHPNLSPGESLKPRDKKILQKICDGAGAVSLCSSDDYVRWLTPLPVKEIKAADWTQNITPLYPLLMKEAFTWKGFTSIVLKGGWRAINLINAVRLVAKAANDGILKFAVVTGRKSI</sequence>
<feature type="chain" id="PRO_0000439951" description="3-hydroxy-16-methoxy-2,3-dihydrotabersonine N-methyltransferase">
    <location>
        <begin position="1"/>
        <end position="289"/>
    </location>
</feature>
<feature type="region of interest" description="SAM motif I" evidence="2">
    <location>
        <begin position="71"/>
        <end position="80"/>
    </location>
</feature>
<feature type="region of interest" description="SAM motif II" evidence="2">
    <location>
        <begin position="134"/>
        <end position="142"/>
    </location>
</feature>
<feature type="region of interest" description="SAM motif III" evidence="2">
    <location>
        <begin position="161"/>
        <end position="170"/>
    </location>
</feature>
<feature type="short sequence motif" description="Microbody targeting signal" evidence="1">
    <location>
        <begin position="287"/>
        <end position="289"/>
    </location>
</feature>
<feature type="sequence conflict" description="In Ref. 1; ADP00410." evidence="12" ref="1">
    <original>E</original>
    <variation>K</variation>
    <location>
        <position position="146"/>
    </location>
</feature>